<dbReference type="EMBL" id="X91135">
    <property type="protein sequence ID" value="CAA62575.1"/>
    <property type="molecule type" value="Genomic_DNA"/>
</dbReference>
<dbReference type="EMBL" id="U94848">
    <property type="protein sequence ID" value="AAB96543.1"/>
    <property type="molecule type" value="Genomic_DNA"/>
</dbReference>
<dbReference type="EMBL" id="AY603355">
    <property type="protein sequence ID" value="AAT10563.1"/>
    <property type="molecule type" value="Genomic_DNA"/>
</dbReference>
<dbReference type="PIR" id="T37438">
    <property type="entry name" value="T37438"/>
</dbReference>
<dbReference type="SMR" id="Q89182"/>
<dbReference type="GlyCosmos" id="Q89182">
    <property type="glycosylation" value="5 sites, No reported glycans"/>
</dbReference>
<dbReference type="Proteomes" id="UP000159908">
    <property type="component" value="Segment"/>
</dbReference>
<dbReference type="Proteomes" id="UP000172909">
    <property type="component" value="Segment"/>
</dbReference>
<dbReference type="GO" id="GO:0033644">
    <property type="term" value="C:host cell membrane"/>
    <property type="evidence" value="ECO:0007669"/>
    <property type="project" value="UniProtKB-SubCell"/>
</dbReference>
<dbReference type="GO" id="GO:0016020">
    <property type="term" value="C:membrane"/>
    <property type="evidence" value="ECO:0007669"/>
    <property type="project" value="UniProtKB-KW"/>
</dbReference>
<dbReference type="GO" id="GO:0019031">
    <property type="term" value="C:viral envelope"/>
    <property type="evidence" value="ECO:0007669"/>
    <property type="project" value="UniProtKB-KW"/>
</dbReference>
<dbReference type="GO" id="GO:0055036">
    <property type="term" value="C:virion membrane"/>
    <property type="evidence" value="ECO:0007669"/>
    <property type="project" value="UniProtKB-SubCell"/>
</dbReference>
<dbReference type="Gene3D" id="2.60.40.10">
    <property type="entry name" value="Immunoglobulins"/>
    <property type="match status" value="1"/>
</dbReference>
<dbReference type="InterPro" id="IPR007110">
    <property type="entry name" value="Ig-like_dom"/>
</dbReference>
<dbReference type="InterPro" id="IPR036179">
    <property type="entry name" value="Ig-like_dom_sf"/>
</dbReference>
<dbReference type="InterPro" id="IPR013783">
    <property type="entry name" value="Ig-like_fold"/>
</dbReference>
<dbReference type="InterPro" id="IPR003599">
    <property type="entry name" value="Ig_sub"/>
</dbReference>
<dbReference type="InterPro" id="IPR013106">
    <property type="entry name" value="Ig_V-set"/>
</dbReference>
<dbReference type="Pfam" id="PF07686">
    <property type="entry name" value="V-set"/>
    <property type="match status" value="1"/>
</dbReference>
<dbReference type="SMART" id="SM00409">
    <property type="entry name" value="IG"/>
    <property type="match status" value="1"/>
</dbReference>
<dbReference type="SUPFAM" id="SSF48726">
    <property type="entry name" value="Immunoglobulin"/>
    <property type="match status" value="1"/>
</dbReference>
<dbReference type="PROSITE" id="PS50835">
    <property type="entry name" value="IG_LIKE"/>
    <property type="match status" value="1"/>
</dbReference>
<reference key="1">
    <citation type="journal article" date="1996" name="Gene">
        <title>Characterization of the vaccinia MVA hemagglutinin gene locus and its evaluation as an insertion site for foreign genes.</title>
        <authorList>
            <person name="Antoine G."/>
            <person name="Scheiflinger F."/>
            <person name="Holzer G."/>
            <person name="Langmann T."/>
            <person name="Falkner F.G."/>
            <person name="Dorner F."/>
        </authorList>
    </citation>
    <scope>NUCLEOTIDE SEQUENCE [GENOMIC DNA]</scope>
</reference>
<reference key="2">
    <citation type="journal article" date="1998" name="Virology">
        <title>The complete genomic sequence of the modified vaccinia Ankara strain: comparison with other orthopoxviruses.</title>
        <authorList>
            <person name="Antoine G."/>
            <person name="Scheiflinger F."/>
            <person name="Dorner F."/>
            <person name="Falkner F.G."/>
        </authorList>
    </citation>
    <scope>NUCLEOTIDE SEQUENCE [LARGE SCALE GENOMIC DNA]</scope>
</reference>
<reference key="3">
    <citation type="submission" date="2004-04" db="EMBL/GenBank/DDBJ databases">
        <authorList>
            <person name="Esposito J.J."/>
            <person name="Frace M."/>
            <person name="Sammons S.A."/>
            <person name="Olsen-Rasmussen M.S."/>
            <person name="Osborne J."/>
            <person name="Khristova M."/>
            <person name="Wohlhueter R.M."/>
        </authorList>
    </citation>
    <scope>NUCLEOTIDE SEQUENCE [LARGE SCALE GENOMIC DNA]</scope>
    <source>
        <strain>Isolate Acambis 3000</strain>
    </source>
</reference>
<keyword id="KW-1015">Disulfide bond</keyword>
<keyword id="KW-0244">Early protein</keyword>
<keyword id="KW-0325">Glycoprotein</keyword>
<keyword id="KW-0348">Hemagglutinin</keyword>
<keyword id="KW-1043">Host membrane</keyword>
<keyword id="KW-0393">Immunoglobulin domain</keyword>
<keyword id="KW-0426">Late protein</keyword>
<keyword id="KW-0472">Membrane</keyword>
<keyword id="KW-0732">Signal</keyword>
<keyword id="KW-0812">Transmembrane</keyword>
<keyword id="KW-1133">Transmembrane helix</keyword>
<keyword id="KW-0261">Viral envelope protein</keyword>
<keyword id="KW-0946">Virion</keyword>
<evidence type="ECO:0000250" key="1"/>
<evidence type="ECO:0000250" key="2">
    <source>
        <dbReference type="UniProtKB" id="Q01218"/>
    </source>
</evidence>
<evidence type="ECO:0000255" key="3"/>
<evidence type="ECO:0000255" key="4">
    <source>
        <dbReference type="PROSITE-ProRule" id="PRU00114"/>
    </source>
</evidence>
<evidence type="ECO:0000256" key="5">
    <source>
        <dbReference type="SAM" id="MobiDB-lite"/>
    </source>
</evidence>
<evidence type="ECO:0000305" key="6"/>
<organismHost>
    <name type="scientific">Homo sapiens</name>
    <name type="common">Human</name>
    <dbReference type="NCBI Taxonomy" id="9606"/>
</organismHost>
<feature type="signal peptide" evidence="1">
    <location>
        <begin position="1"/>
        <end position="16"/>
    </location>
</feature>
<feature type="chain" id="PRO_0000040564" description="Protein OPG185">
    <location>
        <begin position="17"/>
        <end position="315"/>
    </location>
</feature>
<feature type="topological domain" description="Virion surface" evidence="3">
    <location>
        <begin position="17"/>
        <end position="279"/>
    </location>
</feature>
<feature type="transmembrane region" description="Helical" evidence="3">
    <location>
        <begin position="280"/>
        <end position="303"/>
    </location>
</feature>
<feature type="topological domain" description="Intravirion" evidence="3">
    <location>
        <begin position="304"/>
        <end position="315"/>
    </location>
</feature>
<feature type="domain" description="Ig-like V-type">
    <location>
        <begin position="17"/>
        <end position="121"/>
    </location>
</feature>
<feature type="region of interest" description="Disordered" evidence="5">
    <location>
        <begin position="191"/>
        <end position="213"/>
    </location>
</feature>
<feature type="compositionally biased region" description="Polar residues" evidence="5">
    <location>
        <begin position="191"/>
        <end position="202"/>
    </location>
</feature>
<feature type="glycosylation site" description="N-linked (GlcNAc...) asparagine; by host" evidence="3">
    <location>
        <position position="37"/>
    </location>
</feature>
<feature type="glycosylation site" description="N-linked (GlcNAc...) asparagine; by host" evidence="3">
    <location>
        <position position="69"/>
    </location>
</feature>
<feature type="glycosylation site" description="N-linked (GlcNAc...) asparagine; by host" evidence="3">
    <location>
        <position position="112"/>
    </location>
</feature>
<feature type="glycosylation site" description="N-linked (GlcNAc...) asparagine; by host" evidence="3">
    <location>
        <position position="161"/>
    </location>
</feature>
<feature type="glycosylation site" description="N-linked (GlcNAc...) asparagine; by host" evidence="3">
    <location>
        <position position="254"/>
    </location>
</feature>
<feature type="disulfide bond" evidence="4">
    <location>
        <begin position="34"/>
        <end position="103"/>
    </location>
</feature>
<feature type="disulfide bond" description="Interchain (with C-20 in complement control protein C3)" evidence="4">
    <location>
        <position position="162"/>
    </location>
</feature>
<gene>
    <name type="primary">OPG185</name>
    <name type="synonym">HA</name>
    <name type="ordered locus">MVA165R</name>
    <name type="ordered locus">ACAM3000_MVA_165</name>
    <name type="ORF">A56R</name>
</gene>
<proteinExistence type="evidence at transcript level"/>
<name>HEMA_VACCA</name>
<organism>
    <name type="scientific">Vaccinia virus (strain Ankara)</name>
    <name type="common">VACV</name>
    <dbReference type="NCBI Taxonomy" id="126794"/>
    <lineage>
        <taxon>Viruses</taxon>
        <taxon>Varidnaviria</taxon>
        <taxon>Bamfordvirae</taxon>
        <taxon>Nucleocytoviricota</taxon>
        <taxon>Pokkesviricetes</taxon>
        <taxon>Chitovirales</taxon>
        <taxon>Poxviridae</taxon>
        <taxon>Chordopoxvirinae</taxon>
        <taxon>Orthopoxvirus</taxon>
        <taxon>Vaccinia virus</taxon>
    </lineage>
</organism>
<accession>Q89182</accession>
<protein>
    <recommendedName>
        <fullName>Protein OPG185</fullName>
    </recommendedName>
    <alternativeName>
        <fullName>Hemagglutinin</fullName>
    </alternativeName>
</protein>
<comment type="function">
    <text evidence="2">Prevents cell to cell fusion by interacting with and directing the viral OPG040 protein on the host plasma membrane. The OPG185-OPG040 complex associates with components of the entry fusion complex (EFC) presumably to avoid superinfection and syncytium formation. Via its interaction with C3/VCP protein, protects the infected cell and probably also the extracellular enveloped virus from complement attack.</text>
</comment>
<comment type="subunit">
    <text evidence="2">Heterodimerizes with OPG040. The heterodimer OPG185-OPG040 interacts with components of the entry fusion complex OPG143 and OPG094. Heterodimer with C3/VPC protein; disulfide-linked.</text>
</comment>
<comment type="subcellular location">
    <subcellularLocation>
        <location evidence="2">Virion membrane</location>
        <topology evidence="2">Single-pass type I membrane protein</topology>
    </subcellularLocation>
    <subcellularLocation>
        <location evidence="2">Host membrane</location>
        <topology evidence="2">Single-pass type I membrane protein</topology>
    </subcellularLocation>
    <text evidence="2">Component of extracellular enveloped virus (EEV) but not intracellular mature virus (IMV). Component of the outermost membrane of EEV.</text>
</comment>
<comment type="induction">
    <text>Expressed in the early phase of the viral replicative cycle.</text>
</comment>
<comment type="PTM">
    <text evidence="2">Glycosylated; contains phosphate and sulfate-substituted glycans. O-glycosylation is required for hemagglutination and hemadsorption activities of infected cell membranes.</text>
</comment>
<comment type="similarity">
    <text evidence="6">Belongs to the orthopoxvirus OPG185 family.</text>
</comment>
<sequence length="315" mass="34794">MTRLPILLLLISLVYATPFPQTSKKIGDDATLSCNRNNTNDYVVMSAWYKEPNSIILLAAKSDVLYFDNYTKDKISYDSPYDDLVTTITIKSLTARDAGTYVCAFFMTSPTNDTDKVDYEEYSTELIVNTDSESTIDIILSGSTHSPETSSEKPDYIDNSNCSSVFEIATPEPITDNVEDHTDTVTYTSDSINTVSASSGESTTDETPEPITDKEEDHTVTDTVSYTTVSTSSGIVTTKSTTDDADLYDTYNDNDTVPSTTVGGSTTSISNYKTKDFVEIFGITALIILSAVAIFCITYYIYNKRSRKYKTENKV</sequence>